<keyword id="KW-0067">ATP-binding</keyword>
<keyword id="KW-0315">Glutamine amidotransferase</keyword>
<keyword id="KW-0436">Ligase</keyword>
<keyword id="KW-0460">Magnesium</keyword>
<keyword id="KW-0479">Metal-binding</keyword>
<keyword id="KW-0547">Nucleotide-binding</keyword>
<keyword id="KW-0665">Pyrimidine biosynthesis</keyword>
<keyword id="KW-1185">Reference proteome</keyword>
<accession>Q6AGG5</accession>
<organism>
    <name type="scientific">Leifsonia xyli subsp. xyli (strain CTCB07)</name>
    <dbReference type="NCBI Taxonomy" id="281090"/>
    <lineage>
        <taxon>Bacteria</taxon>
        <taxon>Bacillati</taxon>
        <taxon>Actinomycetota</taxon>
        <taxon>Actinomycetes</taxon>
        <taxon>Micrococcales</taxon>
        <taxon>Microbacteriaceae</taxon>
        <taxon>Leifsonia</taxon>
    </lineage>
</organism>
<dbReference type="EC" id="6.3.4.2" evidence="1"/>
<dbReference type="EMBL" id="AE016822">
    <property type="protein sequence ID" value="AAT88530.1"/>
    <property type="status" value="ALT_INIT"/>
    <property type="molecule type" value="Genomic_DNA"/>
</dbReference>
<dbReference type="RefSeq" id="WP_223227700.1">
    <property type="nucleotide sequence ID" value="NC_006087.1"/>
</dbReference>
<dbReference type="SMR" id="Q6AGG5"/>
<dbReference type="STRING" id="281090.Lxx05650"/>
<dbReference type="MEROPS" id="C26.964"/>
<dbReference type="KEGG" id="lxx:Lxx05650"/>
<dbReference type="eggNOG" id="COG0504">
    <property type="taxonomic scope" value="Bacteria"/>
</dbReference>
<dbReference type="HOGENOM" id="CLU_011675_5_0_11"/>
<dbReference type="UniPathway" id="UPA00159">
    <property type="reaction ID" value="UER00277"/>
</dbReference>
<dbReference type="Proteomes" id="UP000001306">
    <property type="component" value="Chromosome"/>
</dbReference>
<dbReference type="GO" id="GO:0005829">
    <property type="term" value="C:cytosol"/>
    <property type="evidence" value="ECO:0007669"/>
    <property type="project" value="TreeGrafter"/>
</dbReference>
<dbReference type="GO" id="GO:0005524">
    <property type="term" value="F:ATP binding"/>
    <property type="evidence" value="ECO:0007669"/>
    <property type="project" value="UniProtKB-KW"/>
</dbReference>
<dbReference type="GO" id="GO:0003883">
    <property type="term" value="F:CTP synthase activity"/>
    <property type="evidence" value="ECO:0007669"/>
    <property type="project" value="UniProtKB-UniRule"/>
</dbReference>
<dbReference type="GO" id="GO:0004359">
    <property type="term" value="F:glutaminase activity"/>
    <property type="evidence" value="ECO:0007669"/>
    <property type="project" value="RHEA"/>
</dbReference>
<dbReference type="GO" id="GO:0042802">
    <property type="term" value="F:identical protein binding"/>
    <property type="evidence" value="ECO:0007669"/>
    <property type="project" value="TreeGrafter"/>
</dbReference>
<dbReference type="GO" id="GO:0046872">
    <property type="term" value="F:metal ion binding"/>
    <property type="evidence" value="ECO:0007669"/>
    <property type="project" value="UniProtKB-KW"/>
</dbReference>
<dbReference type="GO" id="GO:0044210">
    <property type="term" value="P:'de novo' CTP biosynthetic process"/>
    <property type="evidence" value="ECO:0007669"/>
    <property type="project" value="UniProtKB-UniRule"/>
</dbReference>
<dbReference type="GO" id="GO:0019856">
    <property type="term" value="P:pyrimidine nucleobase biosynthetic process"/>
    <property type="evidence" value="ECO:0007669"/>
    <property type="project" value="TreeGrafter"/>
</dbReference>
<dbReference type="CDD" id="cd03113">
    <property type="entry name" value="CTPS_N"/>
    <property type="match status" value="1"/>
</dbReference>
<dbReference type="CDD" id="cd01746">
    <property type="entry name" value="GATase1_CTP_Synthase"/>
    <property type="match status" value="1"/>
</dbReference>
<dbReference type="FunFam" id="3.40.50.300:FF:000009">
    <property type="entry name" value="CTP synthase"/>
    <property type="match status" value="1"/>
</dbReference>
<dbReference type="FunFam" id="3.40.50.880:FF:000002">
    <property type="entry name" value="CTP synthase"/>
    <property type="match status" value="1"/>
</dbReference>
<dbReference type="Gene3D" id="3.40.50.880">
    <property type="match status" value="1"/>
</dbReference>
<dbReference type="Gene3D" id="3.40.50.300">
    <property type="entry name" value="P-loop containing nucleotide triphosphate hydrolases"/>
    <property type="match status" value="1"/>
</dbReference>
<dbReference type="HAMAP" id="MF_01227">
    <property type="entry name" value="PyrG"/>
    <property type="match status" value="1"/>
</dbReference>
<dbReference type="InterPro" id="IPR029062">
    <property type="entry name" value="Class_I_gatase-like"/>
</dbReference>
<dbReference type="InterPro" id="IPR004468">
    <property type="entry name" value="CTP_synthase"/>
</dbReference>
<dbReference type="InterPro" id="IPR017456">
    <property type="entry name" value="CTP_synthase_N"/>
</dbReference>
<dbReference type="InterPro" id="IPR017926">
    <property type="entry name" value="GATASE"/>
</dbReference>
<dbReference type="InterPro" id="IPR033828">
    <property type="entry name" value="GATase1_CTP_Synthase"/>
</dbReference>
<dbReference type="InterPro" id="IPR027417">
    <property type="entry name" value="P-loop_NTPase"/>
</dbReference>
<dbReference type="NCBIfam" id="NF003792">
    <property type="entry name" value="PRK05380.1"/>
    <property type="match status" value="1"/>
</dbReference>
<dbReference type="NCBIfam" id="TIGR00337">
    <property type="entry name" value="PyrG"/>
    <property type="match status" value="1"/>
</dbReference>
<dbReference type="PANTHER" id="PTHR11550">
    <property type="entry name" value="CTP SYNTHASE"/>
    <property type="match status" value="1"/>
</dbReference>
<dbReference type="PANTHER" id="PTHR11550:SF0">
    <property type="entry name" value="CTP SYNTHASE-RELATED"/>
    <property type="match status" value="1"/>
</dbReference>
<dbReference type="Pfam" id="PF06418">
    <property type="entry name" value="CTP_synth_N"/>
    <property type="match status" value="1"/>
</dbReference>
<dbReference type="Pfam" id="PF00117">
    <property type="entry name" value="GATase"/>
    <property type="match status" value="1"/>
</dbReference>
<dbReference type="SUPFAM" id="SSF52317">
    <property type="entry name" value="Class I glutamine amidotransferase-like"/>
    <property type="match status" value="1"/>
</dbReference>
<dbReference type="SUPFAM" id="SSF52540">
    <property type="entry name" value="P-loop containing nucleoside triphosphate hydrolases"/>
    <property type="match status" value="1"/>
</dbReference>
<dbReference type="PROSITE" id="PS51273">
    <property type="entry name" value="GATASE_TYPE_1"/>
    <property type="match status" value="1"/>
</dbReference>
<protein>
    <recommendedName>
        <fullName evidence="1">CTP synthase</fullName>
        <ecNumber evidence="1">6.3.4.2</ecNumber>
    </recommendedName>
    <alternativeName>
        <fullName evidence="1">Cytidine 5'-triphosphate synthase</fullName>
    </alternativeName>
    <alternativeName>
        <fullName evidence="1">Cytidine triphosphate synthetase</fullName>
        <shortName evidence="1">CTP synthetase</shortName>
        <shortName evidence="1">CTPS</shortName>
    </alternativeName>
    <alternativeName>
        <fullName evidence="1">UTP--ammonia ligase</fullName>
    </alternativeName>
</protein>
<sequence length="566" mass="60539">MSIKRAQLGGTTKHIFVTGGVVSSLGKGLTAASLGNLLTARGLRVVMQKLDPYLNVDPGTMNPFQHGEVFVTDDGAETDLDIGHYERFLDINLGQSANVTTGQIYSNVIAKERRGEYLGDTVQVIPHITDEIKRRMRLQAQPGPDGDPAPDVIITEIGGTVGDIESQPFIESARQVRHELGRKNCFFVHVSLVPFMNASGEQKTKPTQHSVAALRSIGIQPDALVLRSDRPVSEPNKRKIALMCDVDEAAVVNAVDVPSIYDIPSMLHDQGLDAYIIDQLGLTQAADVDWAGWSRLLEAVHDPKHTVTIGLVGKYIDLPDAYLSVTEALCSGGFAHDAKVALKWIASDECQTADGAAAQLSDVDGICVPGGFGVRGIEGKLGALRFARENGIPALGLCLGLQCMVIEYARNEAGLAGASSSEFDPDTAFPVIATMAEQVDIIAGGDLGGTMRLGLYPAALAGGSIVAELYGAAEVSERHRHRYEVNKAYRAQIADAGLWFSGTSPDGHLVECVELPRDVHPFYVGTQAHPELRSRPNRAHPLFAGLIGAALDRQKASLLFDVAADA</sequence>
<comment type="function">
    <text evidence="1">Catalyzes the ATP-dependent amination of UTP to CTP with either L-glutamine or ammonia as the source of nitrogen. Regulates intracellular CTP levels through interactions with the four ribonucleotide triphosphates.</text>
</comment>
<comment type="catalytic activity">
    <reaction evidence="1">
        <text>UTP + L-glutamine + ATP + H2O = CTP + L-glutamate + ADP + phosphate + 2 H(+)</text>
        <dbReference type="Rhea" id="RHEA:26426"/>
        <dbReference type="ChEBI" id="CHEBI:15377"/>
        <dbReference type="ChEBI" id="CHEBI:15378"/>
        <dbReference type="ChEBI" id="CHEBI:29985"/>
        <dbReference type="ChEBI" id="CHEBI:30616"/>
        <dbReference type="ChEBI" id="CHEBI:37563"/>
        <dbReference type="ChEBI" id="CHEBI:43474"/>
        <dbReference type="ChEBI" id="CHEBI:46398"/>
        <dbReference type="ChEBI" id="CHEBI:58359"/>
        <dbReference type="ChEBI" id="CHEBI:456216"/>
        <dbReference type="EC" id="6.3.4.2"/>
    </reaction>
</comment>
<comment type="catalytic activity">
    <reaction evidence="1">
        <text>L-glutamine + H2O = L-glutamate + NH4(+)</text>
        <dbReference type="Rhea" id="RHEA:15889"/>
        <dbReference type="ChEBI" id="CHEBI:15377"/>
        <dbReference type="ChEBI" id="CHEBI:28938"/>
        <dbReference type="ChEBI" id="CHEBI:29985"/>
        <dbReference type="ChEBI" id="CHEBI:58359"/>
    </reaction>
</comment>
<comment type="catalytic activity">
    <reaction evidence="1">
        <text>UTP + NH4(+) + ATP = CTP + ADP + phosphate + 2 H(+)</text>
        <dbReference type="Rhea" id="RHEA:16597"/>
        <dbReference type="ChEBI" id="CHEBI:15378"/>
        <dbReference type="ChEBI" id="CHEBI:28938"/>
        <dbReference type="ChEBI" id="CHEBI:30616"/>
        <dbReference type="ChEBI" id="CHEBI:37563"/>
        <dbReference type="ChEBI" id="CHEBI:43474"/>
        <dbReference type="ChEBI" id="CHEBI:46398"/>
        <dbReference type="ChEBI" id="CHEBI:456216"/>
    </reaction>
</comment>
<comment type="activity regulation">
    <text evidence="1">Allosterically activated by GTP, when glutamine is the substrate; GTP has no effect on the reaction when ammonia is the substrate. The allosteric effector GTP functions by stabilizing the protein conformation that binds the tetrahedral intermediate(s) formed during glutamine hydrolysis. Inhibited by the product CTP, via allosteric rather than competitive inhibition.</text>
</comment>
<comment type="pathway">
    <text evidence="1">Pyrimidine metabolism; CTP biosynthesis via de novo pathway; CTP from UDP: step 2/2.</text>
</comment>
<comment type="subunit">
    <text evidence="1">Homotetramer.</text>
</comment>
<comment type="miscellaneous">
    <text evidence="1">CTPSs have evolved a hybrid strategy for distinguishing between UTP and CTP. The overlapping regions of the product feedback inhibitory and substrate sites recognize a common feature in both compounds, the triphosphate moiety. To differentiate isosteric substrate and product pyrimidine rings, an additional pocket far from the expected kinase/ligase catalytic site, specifically recognizes the cytosine and ribose portions of the product inhibitor.</text>
</comment>
<comment type="similarity">
    <text evidence="1">Belongs to the CTP synthase family.</text>
</comment>
<comment type="sequence caution" evidence="2">
    <conflict type="erroneous initiation">
        <sequence resource="EMBL-CDS" id="AAT88530"/>
    </conflict>
</comment>
<evidence type="ECO:0000255" key="1">
    <source>
        <dbReference type="HAMAP-Rule" id="MF_01227"/>
    </source>
</evidence>
<evidence type="ECO:0000305" key="2"/>
<proteinExistence type="inferred from homology"/>
<reference key="1">
    <citation type="journal article" date="2004" name="Mol. Plant Microbe Interact.">
        <title>The genome sequence of the Gram-positive sugarcane pathogen Leifsonia xyli subsp. xyli.</title>
        <authorList>
            <person name="Monteiro-Vitorello C.B."/>
            <person name="Camargo L.E.A."/>
            <person name="Van Sluys M.A."/>
            <person name="Kitajima J.P."/>
            <person name="Truffi D."/>
            <person name="do Amaral A.M."/>
            <person name="Harakava R."/>
            <person name="de Oliveira J.C.F."/>
            <person name="Wood D."/>
            <person name="de Oliveira M.C."/>
            <person name="Miyaki C.Y."/>
            <person name="Takita M.A."/>
            <person name="da Silva A.C.R."/>
            <person name="Furlan L.R."/>
            <person name="Carraro D.M."/>
            <person name="Camarotte G."/>
            <person name="Almeida N.F. Jr."/>
            <person name="Carrer H."/>
            <person name="Coutinho L.L."/>
            <person name="El-Dorry H.A."/>
            <person name="Ferro M.I.T."/>
            <person name="Gagliardi P.R."/>
            <person name="Giglioti E."/>
            <person name="Goldman M.H.S."/>
            <person name="Goldman G.H."/>
            <person name="Kimura E.T."/>
            <person name="Ferro E.S."/>
            <person name="Kuramae E.E."/>
            <person name="Lemos E.G.M."/>
            <person name="Lemos M.V.F."/>
            <person name="Mauro S.M.Z."/>
            <person name="Machado M.A."/>
            <person name="Marino C.L."/>
            <person name="Menck C.F."/>
            <person name="Nunes L.R."/>
            <person name="Oliveira R.C."/>
            <person name="Pereira G.G."/>
            <person name="Siqueira W."/>
            <person name="de Souza A.A."/>
            <person name="Tsai S.M."/>
            <person name="Zanca A.S."/>
            <person name="Simpson A.J.G."/>
            <person name="Brumbley S.M."/>
            <person name="Setubal J.C."/>
        </authorList>
    </citation>
    <scope>NUCLEOTIDE SEQUENCE [LARGE SCALE GENOMIC DNA]</scope>
    <source>
        <strain>CTCB07</strain>
    </source>
</reference>
<name>PYRG_LEIXX</name>
<gene>
    <name evidence="1" type="primary">pyrG</name>
    <name type="ordered locus">Lxx05650</name>
</gene>
<feature type="chain" id="PRO_0000266147" description="CTP synthase">
    <location>
        <begin position="1"/>
        <end position="566"/>
    </location>
</feature>
<feature type="domain" description="Glutamine amidotransferase type-1" evidence="1">
    <location>
        <begin position="308"/>
        <end position="556"/>
    </location>
</feature>
<feature type="region of interest" description="Amidoligase domain" evidence="1">
    <location>
        <begin position="1"/>
        <end position="282"/>
    </location>
</feature>
<feature type="active site" description="Nucleophile; for glutamine hydrolysis" evidence="1">
    <location>
        <position position="398"/>
    </location>
</feature>
<feature type="active site" evidence="1">
    <location>
        <position position="529"/>
    </location>
</feature>
<feature type="active site" evidence="1">
    <location>
        <position position="531"/>
    </location>
</feature>
<feature type="binding site" evidence="1">
    <location>
        <position position="23"/>
    </location>
    <ligand>
        <name>CTP</name>
        <dbReference type="ChEBI" id="CHEBI:37563"/>
        <note>allosteric inhibitor</note>
    </ligand>
</feature>
<feature type="binding site" evidence="1">
    <location>
        <position position="23"/>
    </location>
    <ligand>
        <name>UTP</name>
        <dbReference type="ChEBI" id="CHEBI:46398"/>
    </ligand>
</feature>
<feature type="binding site" evidence="1">
    <location>
        <begin position="24"/>
        <end position="29"/>
    </location>
    <ligand>
        <name>ATP</name>
        <dbReference type="ChEBI" id="CHEBI:30616"/>
    </ligand>
</feature>
<feature type="binding site" evidence="1">
    <location>
        <position position="81"/>
    </location>
    <ligand>
        <name>ATP</name>
        <dbReference type="ChEBI" id="CHEBI:30616"/>
    </ligand>
</feature>
<feature type="binding site" evidence="1">
    <location>
        <position position="81"/>
    </location>
    <ligand>
        <name>Mg(2+)</name>
        <dbReference type="ChEBI" id="CHEBI:18420"/>
    </ligand>
</feature>
<feature type="binding site" evidence="1">
    <location>
        <position position="156"/>
    </location>
    <ligand>
        <name>Mg(2+)</name>
        <dbReference type="ChEBI" id="CHEBI:18420"/>
    </ligand>
</feature>
<feature type="binding site" evidence="1">
    <location>
        <begin position="163"/>
        <end position="165"/>
    </location>
    <ligand>
        <name>CTP</name>
        <dbReference type="ChEBI" id="CHEBI:37563"/>
        <note>allosteric inhibitor</note>
    </ligand>
</feature>
<feature type="binding site" evidence="1">
    <location>
        <begin position="203"/>
        <end position="208"/>
    </location>
    <ligand>
        <name>CTP</name>
        <dbReference type="ChEBI" id="CHEBI:37563"/>
        <note>allosteric inhibitor</note>
    </ligand>
</feature>
<feature type="binding site" evidence="1">
    <location>
        <begin position="203"/>
        <end position="208"/>
    </location>
    <ligand>
        <name>UTP</name>
        <dbReference type="ChEBI" id="CHEBI:46398"/>
    </ligand>
</feature>
<feature type="binding site" evidence="1">
    <location>
        <position position="239"/>
    </location>
    <ligand>
        <name>CTP</name>
        <dbReference type="ChEBI" id="CHEBI:37563"/>
        <note>allosteric inhibitor</note>
    </ligand>
</feature>
<feature type="binding site" evidence="1">
    <location>
        <position position="239"/>
    </location>
    <ligand>
        <name>UTP</name>
        <dbReference type="ChEBI" id="CHEBI:46398"/>
    </ligand>
</feature>
<feature type="binding site" evidence="1">
    <location>
        <position position="371"/>
    </location>
    <ligand>
        <name>L-glutamine</name>
        <dbReference type="ChEBI" id="CHEBI:58359"/>
    </ligand>
</feature>
<feature type="binding site" evidence="1">
    <location>
        <begin position="399"/>
        <end position="402"/>
    </location>
    <ligand>
        <name>L-glutamine</name>
        <dbReference type="ChEBI" id="CHEBI:58359"/>
    </ligand>
</feature>
<feature type="binding site" evidence="1">
    <location>
        <position position="422"/>
    </location>
    <ligand>
        <name>L-glutamine</name>
        <dbReference type="ChEBI" id="CHEBI:58359"/>
    </ligand>
</feature>
<feature type="binding site" evidence="1">
    <location>
        <position position="482"/>
    </location>
    <ligand>
        <name>L-glutamine</name>
        <dbReference type="ChEBI" id="CHEBI:58359"/>
    </ligand>
</feature>